<accession>Q3T0Z2</accession>
<keyword id="KW-0007">Acetylation</keyword>
<keyword id="KW-0963">Cytoplasm</keyword>
<keyword id="KW-0446">Lipid-binding</keyword>
<keyword id="KW-0472">Membrane</keyword>
<keyword id="KW-1185">Reference proteome</keyword>
<keyword id="KW-0813">Transport</keyword>
<gene>
    <name type="primary">FABP6</name>
    <name type="synonym">ILBP</name>
</gene>
<sequence length="128" mass="14460">MAFTGKYETESEKNYDEFMKRLGLSSDRIEKGRNFKVISEIQQDGQNFTWSQHYPGGHSISNNFTIGKETEMETVGNKKFKVTVKMEGGKVVVDSANYHHTVEIVDGKLVEVSTFGGVIYERVSKKVA</sequence>
<organism>
    <name type="scientific">Bos taurus</name>
    <name type="common">Bovine</name>
    <dbReference type="NCBI Taxonomy" id="9913"/>
    <lineage>
        <taxon>Eukaryota</taxon>
        <taxon>Metazoa</taxon>
        <taxon>Chordata</taxon>
        <taxon>Craniata</taxon>
        <taxon>Vertebrata</taxon>
        <taxon>Euteleostomi</taxon>
        <taxon>Mammalia</taxon>
        <taxon>Eutheria</taxon>
        <taxon>Laurasiatheria</taxon>
        <taxon>Artiodactyla</taxon>
        <taxon>Ruminantia</taxon>
        <taxon>Pecora</taxon>
        <taxon>Bovidae</taxon>
        <taxon>Bovinae</taxon>
        <taxon>Bos</taxon>
    </lineage>
</organism>
<dbReference type="EMBL" id="BC102199">
    <property type="protein sequence ID" value="AAI02200.1"/>
    <property type="molecule type" value="mRNA"/>
</dbReference>
<dbReference type="RefSeq" id="NP_001069143.1">
    <property type="nucleotide sequence ID" value="NM_001075675.2"/>
</dbReference>
<dbReference type="SMR" id="Q3T0Z2"/>
<dbReference type="FunCoup" id="Q3T0Z2">
    <property type="interactions" value="90"/>
</dbReference>
<dbReference type="STRING" id="9913.ENSBTAP00000014054"/>
<dbReference type="PaxDb" id="9913-ENSBTAP00000014054"/>
<dbReference type="Ensembl" id="ENSBTAT00000014054.5">
    <property type="protein sequence ID" value="ENSBTAP00000014054.5"/>
    <property type="gene ID" value="ENSBTAG00000010632.5"/>
</dbReference>
<dbReference type="GeneID" id="514650"/>
<dbReference type="KEGG" id="bta:514650"/>
<dbReference type="CTD" id="2172"/>
<dbReference type="VGNC" id="VGNC:28698">
    <property type="gene designation" value="FABP6"/>
</dbReference>
<dbReference type="eggNOG" id="KOG4015">
    <property type="taxonomic scope" value="Eukaryota"/>
</dbReference>
<dbReference type="GeneTree" id="ENSGT00940000157139"/>
<dbReference type="HOGENOM" id="CLU_113772_4_0_1"/>
<dbReference type="InParanoid" id="Q3T0Z2"/>
<dbReference type="OrthoDB" id="10016075at2759"/>
<dbReference type="TreeFam" id="TF330348"/>
<dbReference type="Proteomes" id="UP000009136">
    <property type="component" value="Chromosome 7"/>
</dbReference>
<dbReference type="GO" id="GO:0005829">
    <property type="term" value="C:cytosol"/>
    <property type="evidence" value="ECO:0000318"/>
    <property type="project" value="GO_Central"/>
</dbReference>
<dbReference type="GO" id="GO:0016020">
    <property type="term" value="C:membrane"/>
    <property type="evidence" value="ECO:0007669"/>
    <property type="project" value="UniProtKB-SubCell"/>
</dbReference>
<dbReference type="GO" id="GO:0005634">
    <property type="term" value="C:nucleus"/>
    <property type="evidence" value="ECO:0000318"/>
    <property type="project" value="GO_Central"/>
</dbReference>
<dbReference type="GO" id="GO:0005504">
    <property type="term" value="F:fatty acid binding"/>
    <property type="evidence" value="ECO:0000318"/>
    <property type="project" value="GO_Central"/>
</dbReference>
<dbReference type="GO" id="GO:0015908">
    <property type="term" value="P:fatty acid transport"/>
    <property type="evidence" value="ECO:0000318"/>
    <property type="project" value="GO_Central"/>
</dbReference>
<dbReference type="FunFam" id="2.40.128.20:FF:000006">
    <property type="entry name" value="Fatty acid-binding protein, liver"/>
    <property type="match status" value="1"/>
</dbReference>
<dbReference type="Gene3D" id="2.40.128.20">
    <property type="match status" value="1"/>
</dbReference>
<dbReference type="InterPro" id="IPR012674">
    <property type="entry name" value="Calycin"/>
</dbReference>
<dbReference type="InterPro" id="IPR000463">
    <property type="entry name" value="Fatty_acid-bd"/>
</dbReference>
<dbReference type="InterPro" id="IPR031259">
    <property type="entry name" value="ILBP"/>
</dbReference>
<dbReference type="PANTHER" id="PTHR11955">
    <property type="entry name" value="FATTY ACID BINDING PROTEIN"/>
    <property type="match status" value="1"/>
</dbReference>
<dbReference type="Pfam" id="PF14651">
    <property type="entry name" value="Lipocalin_7"/>
    <property type="match status" value="1"/>
</dbReference>
<dbReference type="PRINTS" id="PR00178">
    <property type="entry name" value="FATTYACIDBP"/>
</dbReference>
<dbReference type="SUPFAM" id="SSF50814">
    <property type="entry name" value="Lipocalins"/>
    <property type="match status" value="1"/>
</dbReference>
<reference key="1">
    <citation type="submission" date="2005-08" db="EMBL/GenBank/DDBJ databases">
        <authorList>
            <consortium name="NIH - Mammalian Gene Collection (MGC) project"/>
        </authorList>
    </citation>
    <scope>NUCLEOTIDE SEQUENCE [LARGE SCALE MRNA]</scope>
    <source>
        <strain>Crossbred X Angus</strain>
        <tissue>Ileum</tissue>
    </source>
</reference>
<feature type="initiator methionine" description="Removed" evidence="1">
    <location>
        <position position="1"/>
    </location>
</feature>
<feature type="chain" id="PRO_0000274030" description="Gastrotropin">
    <location>
        <begin position="2"/>
        <end position="128"/>
    </location>
</feature>
<feature type="modified residue" description="N-acetylalanine" evidence="1">
    <location>
        <position position="2"/>
    </location>
</feature>
<evidence type="ECO:0000250" key="1">
    <source>
        <dbReference type="UniProtKB" id="P10289"/>
    </source>
</evidence>
<evidence type="ECO:0000250" key="2">
    <source>
        <dbReference type="UniProtKB" id="P50119"/>
    </source>
</evidence>
<evidence type="ECO:0000250" key="3">
    <source>
        <dbReference type="UniProtKB" id="P51161"/>
    </source>
</evidence>
<evidence type="ECO:0000250" key="4">
    <source>
        <dbReference type="UniProtKB" id="P51162"/>
    </source>
</evidence>
<evidence type="ECO:0000250" key="5">
    <source>
        <dbReference type="UniProtKB" id="P80020"/>
    </source>
</evidence>
<evidence type="ECO:0000305" key="6"/>
<protein>
    <recommendedName>
        <fullName>Gastrotropin</fullName>
        <shortName>GT</shortName>
    </recommendedName>
    <alternativeName>
        <fullName>Fatty acid-binding protein 6</fullName>
    </alternativeName>
    <alternativeName>
        <fullName>Ileal lipid-binding protein</fullName>
        <shortName>ILBP</shortName>
    </alternativeName>
</protein>
<proteinExistence type="evidence at transcript level"/>
<name>FABP6_BOVIN</name>
<comment type="function">
    <text evidence="1 4">Binds to bile acids and is involved in enterohepatic bile acid metabolism. Required for efficient apical to basolateral transport of conjugated bile acids in ileal enterocytes. Stimulates gastric acid and pepsinogen secretion (By similarity).</text>
</comment>
<comment type="subcellular location">
    <subcellularLocation>
        <location evidence="5">Cytoplasm</location>
    </subcellularLocation>
    <subcellularLocation>
        <location>Membrane</location>
        <topology evidence="2">Peripheral membrane protein</topology>
        <orientation evidence="2">Cytoplasmic side</orientation>
    </subcellularLocation>
</comment>
<comment type="domain">
    <text evidence="1 3">Forms a beta-barrel structure that accommodates hydrophobic ligands in its interior. Can bind at least two ligands per molecule, however, the stoichiometry is debated.</text>
</comment>
<comment type="similarity">
    <text evidence="6">Belongs to the calycin superfamily. Fatty-acid binding protein (FABP) family.</text>
</comment>